<gene>
    <name evidence="1" type="primary">pckA</name>
    <name type="ordered locus">RPC_0599</name>
</gene>
<proteinExistence type="inferred from homology"/>
<protein>
    <recommendedName>
        <fullName evidence="1">Phosphoenolpyruvate carboxykinase (ATP)</fullName>
        <shortName evidence="1">PCK</shortName>
        <shortName evidence="1">PEP carboxykinase</shortName>
        <shortName evidence="1">PEPCK</shortName>
        <ecNumber evidence="1">4.1.1.49</ecNumber>
    </recommendedName>
</protein>
<accession>Q21BR2</accession>
<feature type="chain" id="PRO_1000026344" description="Phosphoenolpyruvate carboxykinase (ATP)">
    <location>
        <begin position="1"/>
        <end position="537"/>
    </location>
</feature>
<feature type="region of interest" description="Disordered" evidence="2">
    <location>
        <begin position="312"/>
        <end position="339"/>
    </location>
</feature>
<feature type="compositionally biased region" description="Basic and acidic residues" evidence="2">
    <location>
        <begin position="312"/>
        <end position="321"/>
    </location>
</feature>
<feature type="binding site" evidence="1">
    <location>
        <position position="61"/>
    </location>
    <ligand>
        <name>substrate</name>
    </ligand>
</feature>
<feature type="binding site" evidence="1">
    <location>
        <position position="195"/>
    </location>
    <ligand>
        <name>substrate</name>
    </ligand>
</feature>
<feature type="binding site" evidence="1">
    <location>
        <position position="201"/>
    </location>
    <ligand>
        <name>ATP</name>
        <dbReference type="ChEBI" id="CHEBI:30616"/>
    </ligand>
</feature>
<feature type="binding site" evidence="1">
    <location>
        <position position="201"/>
    </location>
    <ligand>
        <name>Mn(2+)</name>
        <dbReference type="ChEBI" id="CHEBI:29035"/>
    </ligand>
</feature>
<feature type="binding site" evidence="1">
    <location>
        <position position="201"/>
    </location>
    <ligand>
        <name>substrate</name>
    </ligand>
</feature>
<feature type="binding site" evidence="1">
    <location>
        <position position="220"/>
    </location>
    <ligand>
        <name>ATP</name>
        <dbReference type="ChEBI" id="CHEBI:30616"/>
    </ligand>
</feature>
<feature type="binding site" evidence="1">
    <location>
        <position position="220"/>
    </location>
    <ligand>
        <name>Mn(2+)</name>
        <dbReference type="ChEBI" id="CHEBI:29035"/>
    </ligand>
</feature>
<feature type="binding site" evidence="1">
    <location>
        <begin position="236"/>
        <end position="244"/>
    </location>
    <ligand>
        <name>ATP</name>
        <dbReference type="ChEBI" id="CHEBI:30616"/>
    </ligand>
</feature>
<feature type="binding site" evidence="1">
    <location>
        <position position="257"/>
    </location>
    <ligand>
        <name>Mn(2+)</name>
        <dbReference type="ChEBI" id="CHEBI:29035"/>
    </ligand>
</feature>
<feature type="binding site" evidence="1">
    <location>
        <position position="285"/>
    </location>
    <ligand>
        <name>ATP</name>
        <dbReference type="ChEBI" id="CHEBI:30616"/>
    </ligand>
</feature>
<feature type="binding site" evidence="1">
    <location>
        <position position="323"/>
    </location>
    <ligand>
        <name>ATP</name>
        <dbReference type="ChEBI" id="CHEBI:30616"/>
    </ligand>
</feature>
<feature type="binding site" evidence="1">
    <location>
        <position position="323"/>
    </location>
    <ligand>
        <name>substrate</name>
    </ligand>
</feature>
<feature type="binding site" evidence="1">
    <location>
        <position position="448"/>
    </location>
    <ligand>
        <name>ATP</name>
        <dbReference type="ChEBI" id="CHEBI:30616"/>
    </ligand>
</feature>
<name>PCKA_RHOPB</name>
<keyword id="KW-0067">ATP-binding</keyword>
<keyword id="KW-0963">Cytoplasm</keyword>
<keyword id="KW-0210">Decarboxylase</keyword>
<keyword id="KW-0312">Gluconeogenesis</keyword>
<keyword id="KW-0456">Lyase</keyword>
<keyword id="KW-0464">Manganese</keyword>
<keyword id="KW-0479">Metal-binding</keyword>
<keyword id="KW-0547">Nucleotide-binding</keyword>
<evidence type="ECO:0000255" key="1">
    <source>
        <dbReference type="HAMAP-Rule" id="MF_00453"/>
    </source>
</evidence>
<evidence type="ECO:0000256" key="2">
    <source>
        <dbReference type="SAM" id="MobiDB-lite"/>
    </source>
</evidence>
<organism>
    <name type="scientific">Rhodopseudomonas palustris (strain BisB18)</name>
    <dbReference type="NCBI Taxonomy" id="316056"/>
    <lineage>
        <taxon>Bacteria</taxon>
        <taxon>Pseudomonadati</taxon>
        <taxon>Pseudomonadota</taxon>
        <taxon>Alphaproteobacteria</taxon>
        <taxon>Hyphomicrobiales</taxon>
        <taxon>Nitrobacteraceae</taxon>
        <taxon>Rhodopseudomonas</taxon>
    </lineage>
</organism>
<reference key="1">
    <citation type="submission" date="2006-03" db="EMBL/GenBank/DDBJ databases">
        <title>Complete sequence of Rhodopseudomonas palustris BisB18.</title>
        <authorList>
            <consortium name="US DOE Joint Genome Institute"/>
            <person name="Copeland A."/>
            <person name="Lucas S."/>
            <person name="Lapidus A."/>
            <person name="Barry K."/>
            <person name="Detter J.C."/>
            <person name="Glavina del Rio T."/>
            <person name="Hammon N."/>
            <person name="Israni S."/>
            <person name="Dalin E."/>
            <person name="Tice H."/>
            <person name="Pitluck S."/>
            <person name="Chain P."/>
            <person name="Malfatti S."/>
            <person name="Shin M."/>
            <person name="Vergez L."/>
            <person name="Schmutz J."/>
            <person name="Larimer F."/>
            <person name="Land M."/>
            <person name="Hauser L."/>
            <person name="Pelletier D.A."/>
            <person name="Kyrpides N."/>
            <person name="Anderson I."/>
            <person name="Oda Y."/>
            <person name="Harwood C.S."/>
            <person name="Richardson P."/>
        </authorList>
    </citation>
    <scope>NUCLEOTIDE SEQUENCE [LARGE SCALE GENOMIC DNA]</scope>
    <source>
        <strain>BisB18</strain>
    </source>
</reference>
<dbReference type="EC" id="4.1.1.49" evidence="1"/>
<dbReference type="EMBL" id="CP000301">
    <property type="protein sequence ID" value="ABD86174.1"/>
    <property type="molecule type" value="Genomic_DNA"/>
</dbReference>
<dbReference type="SMR" id="Q21BR2"/>
<dbReference type="STRING" id="316056.RPC_0599"/>
<dbReference type="KEGG" id="rpc:RPC_0599"/>
<dbReference type="eggNOG" id="COG1866">
    <property type="taxonomic scope" value="Bacteria"/>
</dbReference>
<dbReference type="HOGENOM" id="CLU_018247_0_1_5"/>
<dbReference type="OrthoDB" id="9806325at2"/>
<dbReference type="UniPathway" id="UPA00138"/>
<dbReference type="GO" id="GO:0005829">
    <property type="term" value="C:cytosol"/>
    <property type="evidence" value="ECO:0007669"/>
    <property type="project" value="TreeGrafter"/>
</dbReference>
<dbReference type="GO" id="GO:0005524">
    <property type="term" value="F:ATP binding"/>
    <property type="evidence" value="ECO:0007669"/>
    <property type="project" value="UniProtKB-UniRule"/>
</dbReference>
<dbReference type="GO" id="GO:0046872">
    <property type="term" value="F:metal ion binding"/>
    <property type="evidence" value="ECO:0007669"/>
    <property type="project" value="UniProtKB-KW"/>
</dbReference>
<dbReference type="GO" id="GO:0004612">
    <property type="term" value="F:phosphoenolpyruvate carboxykinase (ATP) activity"/>
    <property type="evidence" value="ECO:0007669"/>
    <property type="project" value="UniProtKB-UniRule"/>
</dbReference>
<dbReference type="GO" id="GO:0006094">
    <property type="term" value="P:gluconeogenesis"/>
    <property type="evidence" value="ECO:0007669"/>
    <property type="project" value="UniProtKB-UniRule"/>
</dbReference>
<dbReference type="CDD" id="cd00484">
    <property type="entry name" value="PEPCK_ATP"/>
    <property type="match status" value="1"/>
</dbReference>
<dbReference type="Gene3D" id="3.90.228.20">
    <property type="match status" value="1"/>
</dbReference>
<dbReference type="Gene3D" id="3.40.449.10">
    <property type="entry name" value="Phosphoenolpyruvate Carboxykinase, domain 1"/>
    <property type="match status" value="1"/>
</dbReference>
<dbReference type="Gene3D" id="2.170.8.10">
    <property type="entry name" value="Phosphoenolpyruvate Carboxykinase, domain 2"/>
    <property type="match status" value="1"/>
</dbReference>
<dbReference type="HAMAP" id="MF_00453">
    <property type="entry name" value="PEPCK_ATP"/>
    <property type="match status" value="1"/>
</dbReference>
<dbReference type="InterPro" id="IPR001272">
    <property type="entry name" value="PEP_carboxykinase_ATP"/>
</dbReference>
<dbReference type="InterPro" id="IPR013035">
    <property type="entry name" value="PEP_carboxykinase_C"/>
</dbReference>
<dbReference type="InterPro" id="IPR008210">
    <property type="entry name" value="PEP_carboxykinase_N"/>
</dbReference>
<dbReference type="InterPro" id="IPR015994">
    <property type="entry name" value="PEPCK_ATP_CS"/>
</dbReference>
<dbReference type="NCBIfam" id="TIGR00224">
    <property type="entry name" value="pckA"/>
    <property type="match status" value="1"/>
</dbReference>
<dbReference type="NCBIfam" id="NF006820">
    <property type="entry name" value="PRK09344.1-2"/>
    <property type="match status" value="1"/>
</dbReference>
<dbReference type="NCBIfam" id="NF006821">
    <property type="entry name" value="PRK09344.1-3"/>
    <property type="match status" value="1"/>
</dbReference>
<dbReference type="NCBIfam" id="NF006822">
    <property type="entry name" value="PRK09344.1-4"/>
    <property type="match status" value="1"/>
</dbReference>
<dbReference type="PANTHER" id="PTHR30031:SF0">
    <property type="entry name" value="PHOSPHOENOLPYRUVATE CARBOXYKINASE (ATP)"/>
    <property type="match status" value="1"/>
</dbReference>
<dbReference type="PANTHER" id="PTHR30031">
    <property type="entry name" value="PHOSPHOENOLPYRUVATE CARBOXYKINASE ATP"/>
    <property type="match status" value="1"/>
</dbReference>
<dbReference type="Pfam" id="PF01293">
    <property type="entry name" value="PEPCK_ATP"/>
    <property type="match status" value="1"/>
</dbReference>
<dbReference type="PIRSF" id="PIRSF006294">
    <property type="entry name" value="PEP_crbxkin"/>
    <property type="match status" value="1"/>
</dbReference>
<dbReference type="SUPFAM" id="SSF68923">
    <property type="entry name" value="PEP carboxykinase N-terminal domain"/>
    <property type="match status" value="1"/>
</dbReference>
<dbReference type="SUPFAM" id="SSF53795">
    <property type="entry name" value="PEP carboxykinase-like"/>
    <property type="match status" value="1"/>
</dbReference>
<dbReference type="PROSITE" id="PS00532">
    <property type="entry name" value="PEPCK_ATP"/>
    <property type="match status" value="1"/>
</dbReference>
<sequence length="537" mass="58390">MQETGVRNGAYGADKFGLKNLKGVKWNLTAPHLYEDALRAGEGVLSGDGSLCVDTGIFTGRSPKDKYTVRDANTENTMWWGGNQSITAEQFENLYQDFLKHAEGMSLFAQDLYGGADPSFQIKTRVFTEMAWHSLFIRTLLRRPETAELASFVPELTIIDLASFRADPARHGCKSENVVAIDFTRKIVLIGGTQYAGEMKKSVFTTLNYYLPDKGVLPMHCSANVGPDGDTAIFFGLSGTGKTTLSADPNRTLIGDDEHGWGKDGVFNFEGGCYAKCIKLSAEAEPEIFAASNRFGAILENCVLDPITRKPDFNDGSKTENTRSAYPLESIPNASPTGRAGQPKNVVMLAADAFGVMPPIAKLSPAQAMYHFLSGYTAKVAGTERGVTEPTPVFSTCFGSPFLPRDPSVYGNMLRELIAKHGVDCWLVNTGWTGGMYGTGHRMPIKVTRALLTAALDGSLRNVEFKTDPYFGFAVPTALPGVPSEILDPVKTWADKAAFDTTARKLVAMFQKNFTQFEAQVDAEVRAAQPEAKLAAE</sequence>
<comment type="function">
    <text evidence="1">Involved in the gluconeogenesis. Catalyzes the conversion of oxaloacetate (OAA) to phosphoenolpyruvate (PEP) through direct phosphoryl transfer between the nucleoside triphosphate and OAA.</text>
</comment>
<comment type="catalytic activity">
    <reaction evidence="1">
        <text>oxaloacetate + ATP = phosphoenolpyruvate + ADP + CO2</text>
        <dbReference type="Rhea" id="RHEA:18617"/>
        <dbReference type="ChEBI" id="CHEBI:16452"/>
        <dbReference type="ChEBI" id="CHEBI:16526"/>
        <dbReference type="ChEBI" id="CHEBI:30616"/>
        <dbReference type="ChEBI" id="CHEBI:58702"/>
        <dbReference type="ChEBI" id="CHEBI:456216"/>
        <dbReference type="EC" id="4.1.1.49"/>
    </reaction>
</comment>
<comment type="cofactor">
    <cofactor evidence="1">
        <name>Mn(2+)</name>
        <dbReference type="ChEBI" id="CHEBI:29035"/>
    </cofactor>
    <text evidence="1">Binds 1 Mn(2+) ion per subunit.</text>
</comment>
<comment type="pathway">
    <text evidence="1">Carbohydrate biosynthesis; gluconeogenesis.</text>
</comment>
<comment type="subcellular location">
    <subcellularLocation>
        <location evidence="1">Cytoplasm</location>
    </subcellularLocation>
</comment>
<comment type="similarity">
    <text evidence="1">Belongs to the phosphoenolpyruvate carboxykinase (ATP) family.</text>
</comment>